<proteinExistence type="inferred from homology"/>
<accession>P9WFX0</accession>
<accession>L0T9G8</accession>
<accession>Q79FE7</accession>
<accession>Q7D785</accession>
<gene>
    <name type="primary">mbtI</name>
    <name type="synonym">trpE2</name>
    <name type="ordered locus">MT2454</name>
</gene>
<feature type="chain" id="PRO_0000428463" description="Salicylate synthase">
    <location>
        <begin position="1"/>
        <end position="450"/>
    </location>
</feature>
<feature type="active site" description="Proton donor" evidence="2">
    <location>
        <position position="252"/>
    </location>
</feature>
<feature type="binding site" evidence="1">
    <location>
        <begin position="270"/>
        <end position="271"/>
    </location>
    <ligand>
        <name>substrate</name>
    </ligand>
</feature>
<feature type="binding site" evidence="1">
    <location>
        <position position="297"/>
    </location>
    <ligand>
        <name>Mg(2+)</name>
        <dbReference type="ChEBI" id="CHEBI:18420"/>
    </ligand>
</feature>
<feature type="binding site" evidence="1">
    <location>
        <position position="385"/>
    </location>
    <ligand>
        <name>substrate</name>
    </ligand>
</feature>
<feature type="binding site" evidence="1">
    <location>
        <position position="405"/>
    </location>
    <ligand>
        <name>substrate</name>
    </ligand>
</feature>
<feature type="binding site" evidence="1">
    <location>
        <begin position="419"/>
        <end position="421"/>
    </location>
    <ligand>
        <name>substrate</name>
    </ligand>
</feature>
<feature type="binding site" evidence="1">
    <location>
        <position position="431"/>
    </location>
    <ligand>
        <name>Mg(2+)</name>
        <dbReference type="ChEBI" id="CHEBI:18420"/>
    </ligand>
</feature>
<feature type="binding site" evidence="1">
    <location>
        <position position="434"/>
    </location>
    <ligand>
        <name>Mg(2+)</name>
        <dbReference type="ChEBI" id="CHEBI:18420"/>
    </ligand>
</feature>
<feature type="binding site" evidence="1">
    <location>
        <position position="438"/>
    </location>
    <ligand>
        <name>substrate</name>
    </ligand>
</feature>
<dbReference type="EC" id="5.4.99.5" evidence="1"/>
<dbReference type="EC" id="4.2.99.21" evidence="1"/>
<dbReference type="EC" id="5.4.4.2" evidence="1"/>
<dbReference type="EMBL" id="AE000516">
    <property type="protein sequence ID" value="AAK46749.1"/>
    <property type="molecule type" value="Genomic_DNA"/>
</dbReference>
<dbReference type="RefSeq" id="WP_003412287.1">
    <property type="nucleotide sequence ID" value="NZ_KK341227.1"/>
</dbReference>
<dbReference type="SMR" id="P9WFX0"/>
<dbReference type="BindingDB" id="P9WFX0"/>
<dbReference type="KEGG" id="mtc:MT2454"/>
<dbReference type="PATRIC" id="fig|83331.31.peg.2645"/>
<dbReference type="HOGENOM" id="CLU_006493_2_1_11"/>
<dbReference type="UniPathway" id="UPA00011"/>
<dbReference type="Proteomes" id="UP000001020">
    <property type="component" value="Chromosome"/>
</dbReference>
<dbReference type="GO" id="GO:0004106">
    <property type="term" value="F:chorismate mutase activity"/>
    <property type="evidence" value="ECO:0000250"/>
    <property type="project" value="UniProtKB"/>
</dbReference>
<dbReference type="GO" id="GO:0043904">
    <property type="term" value="F:isochorismate pyruvate lyase activity"/>
    <property type="evidence" value="ECO:0000250"/>
    <property type="project" value="UniProtKB"/>
</dbReference>
<dbReference type="GO" id="GO:0008909">
    <property type="term" value="F:isochorismate synthase activity"/>
    <property type="evidence" value="ECO:0000250"/>
    <property type="project" value="UniProtKB"/>
</dbReference>
<dbReference type="GO" id="GO:0000287">
    <property type="term" value="F:magnesium ion binding"/>
    <property type="evidence" value="ECO:0000250"/>
    <property type="project" value="UniProtKB"/>
</dbReference>
<dbReference type="GO" id="GO:0016833">
    <property type="term" value="F:oxo-acid-lyase activity"/>
    <property type="evidence" value="ECO:0007669"/>
    <property type="project" value="InterPro"/>
</dbReference>
<dbReference type="GO" id="GO:0019540">
    <property type="term" value="P:catechol-containing siderophore biosynthetic process"/>
    <property type="evidence" value="ECO:0000250"/>
    <property type="project" value="UniProtKB"/>
</dbReference>
<dbReference type="GO" id="GO:0000162">
    <property type="term" value="P:L-tryptophan biosynthetic process"/>
    <property type="evidence" value="ECO:0007669"/>
    <property type="project" value="TreeGrafter"/>
</dbReference>
<dbReference type="GO" id="GO:0009697">
    <property type="term" value="P:salicylic acid biosynthetic process"/>
    <property type="evidence" value="ECO:0000250"/>
    <property type="project" value="UniProtKB"/>
</dbReference>
<dbReference type="FunFam" id="3.60.120.10:FF:000010">
    <property type="entry name" value="Salicylate synthase"/>
    <property type="match status" value="1"/>
</dbReference>
<dbReference type="Gene3D" id="3.60.120.10">
    <property type="entry name" value="Anthranilate synthase"/>
    <property type="match status" value="1"/>
</dbReference>
<dbReference type="InterPro" id="IPR005801">
    <property type="entry name" value="ADC_synthase"/>
</dbReference>
<dbReference type="InterPro" id="IPR019999">
    <property type="entry name" value="Anth_synth_I-like"/>
</dbReference>
<dbReference type="InterPro" id="IPR015890">
    <property type="entry name" value="Chorismate_C"/>
</dbReference>
<dbReference type="InterPro" id="IPR019996">
    <property type="entry name" value="Salicylate_synthase"/>
</dbReference>
<dbReference type="NCBIfam" id="TIGR03494">
    <property type="entry name" value="salicyl_syn"/>
    <property type="match status" value="1"/>
</dbReference>
<dbReference type="PANTHER" id="PTHR11236">
    <property type="entry name" value="AMINOBENZOATE/ANTHRANILATE SYNTHASE"/>
    <property type="match status" value="1"/>
</dbReference>
<dbReference type="PANTHER" id="PTHR11236:SF48">
    <property type="entry name" value="ISOCHORISMATE SYNTHASE MENF"/>
    <property type="match status" value="1"/>
</dbReference>
<dbReference type="Pfam" id="PF00425">
    <property type="entry name" value="Chorismate_bind"/>
    <property type="match status" value="1"/>
</dbReference>
<dbReference type="PRINTS" id="PR00095">
    <property type="entry name" value="ANTSNTHASEI"/>
</dbReference>
<dbReference type="SUPFAM" id="SSF56322">
    <property type="entry name" value="ADC synthase"/>
    <property type="match status" value="1"/>
</dbReference>
<reference key="1">
    <citation type="journal article" date="2002" name="J. Bacteriol.">
        <title>Whole-genome comparison of Mycobacterium tuberculosis clinical and laboratory strains.</title>
        <authorList>
            <person name="Fleischmann R.D."/>
            <person name="Alland D."/>
            <person name="Eisen J.A."/>
            <person name="Carpenter L."/>
            <person name="White O."/>
            <person name="Peterson J.D."/>
            <person name="DeBoy R.T."/>
            <person name="Dodson R.J."/>
            <person name="Gwinn M.L."/>
            <person name="Haft D.H."/>
            <person name="Hickey E.K."/>
            <person name="Kolonay J.F."/>
            <person name="Nelson W.C."/>
            <person name="Umayam L.A."/>
            <person name="Ermolaeva M.D."/>
            <person name="Salzberg S.L."/>
            <person name="Delcher A."/>
            <person name="Utterback T.R."/>
            <person name="Weidman J.F."/>
            <person name="Khouri H.M."/>
            <person name="Gill J."/>
            <person name="Mikula A."/>
            <person name="Bishai W."/>
            <person name="Jacobs W.R. Jr."/>
            <person name="Venter J.C."/>
            <person name="Fraser C.M."/>
        </authorList>
    </citation>
    <scope>NUCLEOTIDE SEQUENCE [LARGE SCALE GENOMIC DNA]</scope>
    <source>
        <strain>CDC 1551 / Oshkosh</strain>
    </source>
</reference>
<evidence type="ECO:0000250" key="1">
    <source>
        <dbReference type="UniProtKB" id="P9WFX1"/>
    </source>
</evidence>
<evidence type="ECO:0000250" key="2">
    <source>
        <dbReference type="UniProtKB" id="Q9X9I8"/>
    </source>
</evidence>
<protein>
    <recommendedName>
        <fullName evidence="1">Salicylate synthase</fullName>
    </recommendedName>
    <alternativeName>
        <fullName evidence="1">Chorismate mutase</fullName>
        <shortName evidence="1">CM</shortName>
        <ecNumber evidence="1">5.4.99.5</ecNumber>
    </alternativeName>
    <alternativeName>
        <fullName evidence="1">Isochorismate synthase/isochorismate lyase</fullName>
        <ecNumber evidence="1">4.2.99.21</ecNumber>
        <ecNumber evidence="1">5.4.4.2</ecNumber>
    </alternativeName>
    <alternativeName>
        <fullName evidence="1">Mycobactin synthase protein</fullName>
    </alternativeName>
</protein>
<name>MBTI_MYCTO</name>
<keyword id="KW-0413">Isomerase</keyword>
<keyword id="KW-0456">Lyase</keyword>
<keyword id="KW-0460">Magnesium</keyword>
<keyword id="KW-0479">Metal-binding</keyword>
<keyword id="KW-1185">Reference proteome</keyword>
<sequence>MSELSVATGAVSTASSSIPMPAGVNPADLAAELAAVVTESVDEDYLLYECDGQWVLAAGVQAMVELDSDELRVIRDGVTRRQQWSGRPGAALGEAVDRLLLETDQAFGWVAFEFGVHRYGLQQRLAPHTPLARVFSPRTRIMVSEKEIRLFDAGIRHREAIDRLLATGVREVPQSRSVDVSDDPSGFRRRVAVAVDEIAAGRYHKVILSRCVEVPFAIDFPLTYRLGRRHNTPVRSFLLQLGGIRALGYSPELVTAVRADGVVITEPLAGTRALGRGPAIDRLARDDLESNSKEIVEHAISVRSSLEEITDIAEPGSAAVIDFMTVRERGSVQHLGSTIRARLDPSSDRMAALEALFPAVTASGIPKAAGVEAIFRLDECPRGLYSGAVVMLSADGGLDAALTLRAAYQVGGRTWLRAGAGIIEESEPEREFEETCEKLSTLTPYLVARQ</sequence>
<organism>
    <name type="scientific">Mycobacterium tuberculosis (strain CDC 1551 / Oshkosh)</name>
    <dbReference type="NCBI Taxonomy" id="83331"/>
    <lineage>
        <taxon>Bacteria</taxon>
        <taxon>Bacillati</taxon>
        <taxon>Actinomycetota</taxon>
        <taxon>Actinomycetes</taxon>
        <taxon>Mycobacteriales</taxon>
        <taxon>Mycobacteriaceae</taxon>
        <taxon>Mycobacterium</taxon>
        <taxon>Mycobacterium tuberculosis complex</taxon>
    </lineage>
</organism>
<comment type="function">
    <text evidence="1">Involved in the incorporation of salicylate into the virulence-conferring salicylate-based siderophore mycobactin. Catalyzes the initial conversion of chorismate to yield the intermediate isochorismate (isochorismate synthase activity), and the subsequent elimination of the enolpyruvyl side chain in a lyase reaction to give salicylate (isochorismate pyruvate-lyase activity). In the absence of magnesium, MbtI displays a chorismate mutase activity and converts chorismate to prephenate.</text>
</comment>
<comment type="catalytic activity">
    <reaction evidence="1">
        <text>chorismate = isochorismate</text>
        <dbReference type="Rhea" id="RHEA:18985"/>
        <dbReference type="ChEBI" id="CHEBI:29748"/>
        <dbReference type="ChEBI" id="CHEBI:29780"/>
        <dbReference type="EC" id="5.4.4.2"/>
    </reaction>
</comment>
<comment type="catalytic activity">
    <reaction evidence="1">
        <text>isochorismate = salicylate + pyruvate</text>
        <dbReference type="Rhea" id="RHEA:27874"/>
        <dbReference type="ChEBI" id="CHEBI:15361"/>
        <dbReference type="ChEBI" id="CHEBI:29780"/>
        <dbReference type="ChEBI" id="CHEBI:30762"/>
        <dbReference type="EC" id="4.2.99.21"/>
    </reaction>
</comment>
<comment type="catalytic activity">
    <reaction evidence="1">
        <text>chorismate = prephenate</text>
        <dbReference type="Rhea" id="RHEA:13897"/>
        <dbReference type="ChEBI" id="CHEBI:29748"/>
        <dbReference type="ChEBI" id="CHEBI:29934"/>
        <dbReference type="EC" id="5.4.99.5"/>
    </reaction>
</comment>
<comment type="cofactor">
    <cofactor evidence="1">
        <name>Mg(2+)</name>
        <dbReference type="ChEBI" id="CHEBI:18420"/>
    </cofactor>
</comment>
<comment type="pathway">
    <text evidence="1">Siderophore biosynthesis; mycobactin biosynthesis.</text>
</comment>
<comment type="subunit">
    <text evidence="1">Monomer.</text>
</comment>
<comment type="similarity">
    <text evidence="1">Belongs to the anthranilate synthase component I family. Salicylate synthase subfamily.</text>
</comment>